<proteinExistence type="inferred from homology"/>
<comment type="function">
    <text evidence="1">Catalyzes the ATP-dependent phosphorylation of N-acetyl-L-glutamate.</text>
</comment>
<comment type="catalytic activity">
    <reaction evidence="1">
        <text>N-acetyl-L-glutamate + ATP = N-acetyl-L-glutamyl 5-phosphate + ADP</text>
        <dbReference type="Rhea" id="RHEA:14629"/>
        <dbReference type="ChEBI" id="CHEBI:30616"/>
        <dbReference type="ChEBI" id="CHEBI:44337"/>
        <dbReference type="ChEBI" id="CHEBI:57936"/>
        <dbReference type="ChEBI" id="CHEBI:456216"/>
        <dbReference type="EC" id="2.7.2.8"/>
    </reaction>
</comment>
<comment type="pathway">
    <text evidence="1">Amino-acid biosynthesis; L-arginine biosynthesis; N(2)-acetyl-L-ornithine from L-glutamate: step 2/4.</text>
</comment>
<comment type="subunit">
    <text evidence="1">Homodimer.</text>
</comment>
<comment type="subcellular location">
    <subcellularLocation>
        <location evidence="1">Cytoplasm</location>
    </subcellularLocation>
</comment>
<comment type="similarity">
    <text evidence="1">Belongs to the acetylglutamate kinase family. ArgB subfamily.</text>
</comment>
<keyword id="KW-0028">Amino-acid biosynthesis</keyword>
<keyword id="KW-0055">Arginine biosynthesis</keyword>
<keyword id="KW-0067">ATP-binding</keyword>
<keyword id="KW-0963">Cytoplasm</keyword>
<keyword id="KW-0418">Kinase</keyword>
<keyword id="KW-0547">Nucleotide-binding</keyword>
<keyword id="KW-0808">Transferase</keyword>
<protein>
    <recommendedName>
        <fullName evidence="1">Acetylglutamate kinase</fullName>
        <ecNumber evidence="1">2.7.2.8</ecNumber>
    </recommendedName>
    <alternativeName>
        <fullName evidence="1">N-acetyl-L-glutamate 5-phosphotransferase</fullName>
    </alternativeName>
    <alternativeName>
        <fullName evidence="1">NAG kinase</fullName>
        <shortName evidence="1">NAGK</shortName>
    </alternativeName>
</protein>
<gene>
    <name evidence="1" type="primary">argB</name>
    <name type="ordered locus">SSPA3686</name>
</gene>
<sequence>MNPLIIKLGGVLLDSEEALERLFTALVNYRESHQRPLVIVHGGGCVVDELMKGLNLPVKKKDGLRVTPADQIGIITGALAGTANKTLLAWAKKHHIASVGLFLGDGDSVNVTQLDEALGHVGLAQPGSPKLINMLLENGFLPVVSSIGVTDDGQLMNVNADQAATALAATLGADLILLSDVSGILDGKGQRIAEMTASKAEQLIDQGIITDGMIVKVNAALDAARALGRPVDIASWRHAEQLPALFNGTPIGTRILA</sequence>
<reference key="1">
    <citation type="journal article" date="2009" name="BMC Genomics">
        <title>Pseudogene accumulation in the evolutionary histories of Salmonella enterica serovars Paratyphi A and Typhi.</title>
        <authorList>
            <person name="Holt K.E."/>
            <person name="Thomson N.R."/>
            <person name="Wain J."/>
            <person name="Langridge G.C."/>
            <person name="Hasan R."/>
            <person name="Bhutta Z.A."/>
            <person name="Quail M.A."/>
            <person name="Norbertczak H."/>
            <person name="Walker D."/>
            <person name="Simmonds M."/>
            <person name="White B."/>
            <person name="Bason N."/>
            <person name="Mungall K."/>
            <person name="Dougan G."/>
            <person name="Parkhill J."/>
        </authorList>
    </citation>
    <scope>NUCLEOTIDE SEQUENCE [LARGE SCALE GENOMIC DNA]</scope>
    <source>
        <strain>AKU_12601</strain>
    </source>
</reference>
<organism>
    <name type="scientific">Salmonella paratyphi A (strain AKU_12601)</name>
    <dbReference type="NCBI Taxonomy" id="554290"/>
    <lineage>
        <taxon>Bacteria</taxon>
        <taxon>Pseudomonadati</taxon>
        <taxon>Pseudomonadota</taxon>
        <taxon>Gammaproteobacteria</taxon>
        <taxon>Enterobacterales</taxon>
        <taxon>Enterobacteriaceae</taxon>
        <taxon>Salmonella</taxon>
    </lineage>
</organism>
<name>ARGB_SALPK</name>
<evidence type="ECO:0000255" key="1">
    <source>
        <dbReference type="HAMAP-Rule" id="MF_00082"/>
    </source>
</evidence>
<dbReference type="EC" id="2.7.2.8" evidence="1"/>
<dbReference type="EMBL" id="FM200053">
    <property type="protein sequence ID" value="CAR61969.1"/>
    <property type="molecule type" value="Genomic_DNA"/>
</dbReference>
<dbReference type="SMR" id="B5BJN3"/>
<dbReference type="KEGG" id="sek:SSPA3686"/>
<dbReference type="HOGENOM" id="CLU_053680_1_1_6"/>
<dbReference type="UniPathway" id="UPA00068">
    <property type="reaction ID" value="UER00107"/>
</dbReference>
<dbReference type="Proteomes" id="UP000001869">
    <property type="component" value="Chromosome"/>
</dbReference>
<dbReference type="GO" id="GO:0005737">
    <property type="term" value="C:cytoplasm"/>
    <property type="evidence" value="ECO:0007669"/>
    <property type="project" value="UniProtKB-SubCell"/>
</dbReference>
<dbReference type="GO" id="GO:0003991">
    <property type="term" value="F:acetylglutamate kinase activity"/>
    <property type="evidence" value="ECO:0007669"/>
    <property type="project" value="UniProtKB-UniRule"/>
</dbReference>
<dbReference type="GO" id="GO:0005524">
    <property type="term" value="F:ATP binding"/>
    <property type="evidence" value="ECO:0007669"/>
    <property type="project" value="UniProtKB-UniRule"/>
</dbReference>
<dbReference type="GO" id="GO:0042450">
    <property type="term" value="P:arginine biosynthetic process via ornithine"/>
    <property type="evidence" value="ECO:0007669"/>
    <property type="project" value="UniProtKB-UniRule"/>
</dbReference>
<dbReference type="GO" id="GO:0006526">
    <property type="term" value="P:L-arginine biosynthetic process"/>
    <property type="evidence" value="ECO:0007669"/>
    <property type="project" value="UniProtKB-UniPathway"/>
</dbReference>
<dbReference type="CDD" id="cd04249">
    <property type="entry name" value="AAK_NAGK-NC"/>
    <property type="match status" value="1"/>
</dbReference>
<dbReference type="FunFam" id="3.40.1160.10:FF:000008">
    <property type="entry name" value="Acetylglutamate kinase"/>
    <property type="match status" value="1"/>
</dbReference>
<dbReference type="Gene3D" id="3.40.1160.10">
    <property type="entry name" value="Acetylglutamate kinase-like"/>
    <property type="match status" value="1"/>
</dbReference>
<dbReference type="HAMAP" id="MF_00082">
    <property type="entry name" value="ArgB"/>
    <property type="match status" value="1"/>
</dbReference>
<dbReference type="InterPro" id="IPR036393">
    <property type="entry name" value="AceGlu_kinase-like_sf"/>
</dbReference>
<dbReference type="InterPro" id="IPR004662">
    <property type="entry name" value="AcgluKinase_fam"/>
</dbReference>
<dbReference type="InterPro" id="IPR037528">
    <property type="entry name" value="ArgB"/>
</dbReference>
<dbReference type="InterPro" id="IPR001048">
    <property type="entry name" value="Asp/Glu/Uridylate_kinase"/>
</dbReference>
<dbReference type="InterPro" id="IPR041731">
    <property type="entry name" value="NAGK-NC"/>
</dbReference>
<dbReference type="NCBIfam" id="TIGR00761">
    <property type="entry name" value="argB"/>
    <property type="match status" value="1"/>
</dbReference>
<dbReference type="PANTHER" id="PTHR23342">
    <property type="entry name" value="N-ACETYLGLUTAMATE SYNTHASE"/>
    <property type="match status" value="1"/>
</dbReference>
<dbReference type="PANTHER" id="PTHR23342:SF0">
    <property type="entry name" value="N-ACETYLGLUTAMATE SYNTHASE, MITOCHONDRIAL"/>
    <property type="match status" value="1"/>
</dbReference>
<dbReference type="Pfam" id="PF00696">
    <property type="entry name" value="AA_kinase"/>
    <property type="match status" value="1"/>
</dbReference>
<dbReference type="PIRSF" id="PIRSF000728">
    <property type="entry name" value="NAGK"/>
    <property type="match status" value="1"/>
</dbReference>
<dbReference type="SUPFAM" id="SSF53633">
    <property type="entry name" value="Carbamate kinase-like"/>
    <property type="match status" value="1"/>
</dbReference>
<feature type="chain" id="PRO_1000092884" description="Acetylglutamate kinase">
    <location>
        <begin position="1"/>
        <end position="257"/>
    </location>
</feature>
<feature type="binding site" evidence="1">
    <location>
        <begin position="43"/>
        <end position="44"/>
    </location>
    <ligand>
        <name>substrate</name>
    </ligand>
</feature>
<feature type="binding site" evidence="1">
    <location>
        <position position="65"/>
    </location>
    <ligand>
        <name>substrate</name>
    </ligand>
</feature>
<feature type="binding site" evidence="1">
    <location>
        <position position="157"/>
    </location>
    <ligand>
        <name>substrate</name>
    </ligand>
</feature>
<feature type="binding site" evidence="1">
    <location>
        <begin position="180"/>
        <end position="185"/>
    </location>
    <ligand>
        <name>ATP</name>
        <dbReference type="ChEBI" id="CHEBI:30616"/>
    </ligand>
</feature>
<feature type="binding site" evidence="1">
    <location>
        <begin position="208"/>
        <end position="210"/>
    </location>
    <ligand>
        <name>ATP</name>
        <dbReference type="ChEBI" id="CHEBI:30616"/>
    </ligand>
</feature>
<feature type="site" description="Transition state stabilizer" evidence="1">
    <location>
        <position position="7"/>
    </location>
</feature>
<feature type="site" description="Transition state stabilizer" evidence="1">
    <location>
        <position position="216"/>
    </location>
</feature>
<accession>B5BJN3</accession>